<sequence>MKISICGKGGCGKSSITTLLAKEFAKKGHNVLVIDGDESNLSLHKLLGMDLPKDFIEYLGGRKEFMKKLREKMDGKEVELFEGEISIDSLPKEYLVEKDNIKLLAIGKIHDFGEGCACPMGALLREFLKSLKLKDKEVVIVDTEAGIEHFGRGVEGGCDVIIAIIDPTYESIRLSKKIEEIGEKLGKKVYFIVNKVDDETKDLILENVNKDKVIAVIPNNKEIMKCGLMGEELNAELSEIKDVVEILTK</sequence>
<gene>
    <name type="ordered locus">MJ0084</name>
</gene>
<feature type="chain" id="PRO_0000106686" description="Uncharacterized ATP-binding protein MJ0084">
    <location>
        <begin position="1"/>
        <end position="249"/>
    </location>
</feature>
<feature type="binding site" evidence="1">
    <location>
        <begin position="7"/>
        <end position="14"/>
    </location>
    <ligand>
        <name>ATP</name>
        <dbReference type="ChEBI" id="CHEBI:30616"/>
    </ligand>
</feature>
<reference key="1">
    <citation type="journal article" date="1996" name="Science">
        <title>Complete genome sequence of the methanogenic archaeon, Methanococcus jannaschii.</title>
        <authorList>
            <person name="Bult C.J."/>
            <person name="White O."/>
            <person name="Olsen G.J."/>
            <person name="Zhou L."/>
            <person name="Fleischmann R.D."/>
            <person name="Sutton G.G."/>
            <person name="Blake J.A."/>
            <person name="FitzGerald L.M."/>
            <person name="Clayton R.A."/>
            <person name="Gocayne J.D."/>
            <person name="Kerlavage A.R."/>
            <person name="Dougherty B.A."/>
            <person name="Tomb J.-F."/>
            <person name="Adams M.D."/>
            <person name="Reich C.I."/>
            <person name="Overbeek R."/>
            <person name="Kirkness E.F."/>
            <person name="Weinstock K.G."/>
            <person name="Merrick J.M."/>
            <person name="Glodek A."/>
            <person name="Scott J.L."/>
            <person name="Geoghagen N.S.M."/>
            <person name="Weidman J.F."/>
            <person name="Fuhrmann J.L."/>
            <person name="Nguyen D."/>
            <person name="Utterback T.R."/>
            <person name="Kelley J.M."/>
            <person name="Peterson J.D."/>
            <person name="Sadow P.W."/>
            <person name="Hanna M.C."/>
            <person name="Cotton M.D."/>
            <person name="Roberts K.M."/>
            <person name="Hurst M.A."/>
            <person name="Kaine B.P."/>
            <person name="Borodovsky M."/>
            <person name="Klenk H.-P."/>
            <person name="Fraser C.M."/>
            <person name="Smith H.O."/>
            <person name="Woese C.R."/>
            <person name="Venter J.C."/>
        </authorList>
    </citation>
    <scope>NUCLEOTIDE SEQUENCE [LARGE SCALE GENOMIC DNA]</scope>
    <source>
        <strain>ATCC 43067 / DSM 2661 / JAL-1 / JCM 10045 / NBRC 100440</strain>
    </source>
</reference>
<accession>Q60392</accession>
<organism>
    <name type="scientific">Methanocaldococcus jannaschii (strain ATCC 43067 / DSM 2661 / JAL-1 / JCM 10045 / NBRC 100440)</name>
    <name type="common">Methanococcus jannaschii</name>
    <dbReference type="NCBI Taxonomy" id="243232"/>
    <lineage>
        <taxon>Archaea</taxon>
        <taxon>Methanobacteriati</taxon>
        <taxon>Methanobacteriota</taxon>
        <taxon>Methanomada group</taxon>
        <taxon>Methanococci</taxon>
        <taxon>Methanococcales</taxon>
        <taxon>Methanocaldococcaceae</taxon>
        <taxon>Methanocaldococcus</taxon>
    </lineage>
</organism>
<evidence type="ECO:0000255" key="1"/>
<proteinExistence type="predicted"/>
<protein>
    <recommendedName>
        <fullName>Uncharacterized ATP-binding protein MJ0084</fullName>
    </recommendedName>
</protein>
<name>Y084_METJA</name>
<keyword id="KW-0067">ATP-binding</keyword>
<keyword id="KW-0547">Nucleotide-binding</keyword>
<keyword id="KW-1185">Reference proteome</keyword>
<dbReference type="EMBL" id="L77117">
    <property type="protein sequence ID" value="AAB98064.1"/>
    <property type="molecule type" value="Genomic_DNA"/>
</dbReference>
<dbReference type="PIR" id="D64310">
    <property type="entry name" value="D64310"/>
</dbReference>
<dbReference type="RefSeq" id="WP_010869576.1">
    <property type="nucleotide sequence ID" value="NC_000909.1"/>
</dbReference>
<dbReference type="SMR" id="Q60392"/>
<dbReference type="FunCoup" id="Q60392">
    <property type="interactions" value="2"/>
</dbReference>
<dbReference type="STRING" id="243232.MJ_0084"/>
<dbReference type="PaxDb" id="243232-MJ_0084"/>
<dbReference type="EnsemblBacteria" id="AAB98064">
    <property type="protein sequence ID" value="AAB98064"/>
    <property type="gene ID" value="MJ_0084"/>
</dbReference>
<dbReference type="GeneID" id="1450923"/>
<dbReference type="KEGG" id="mja:MJ_0084"/>
<dbReference type="eggNOG" id="arCOG00588">
    <property type="taxonomic scope" value="Archaea"/>
</dbReference>
<dbReference type="HOGENOM" id="CLU_082962_1_0_2"/>
<dbReference type="InParanoid" id="Q60392"/>
<dbReference type="OrthoDB" id="31168at2157"/>
<dbReference type="PhylomeDB" id="Q60392"/>
<dbReference type="Proteomes" id="UP000000805">
    <property type="component" value="Chromosome"/>
</dbReference>
<dbReference type="GO" id="GO:0009898">
    <property type="term" value="C:cytoplasmic side of plasma membrane"/>
    <property type="evidence" value="ECO:0000318"/>
    <property type="project" value="GO_Central"/>
</dbReference>
<dbReference type="GO" id="GO:0005829">
    <property type="term" value="C:cytosol"/>
    <property type="evidence" value="ECO:0000318"/>
    <property type="project" value="GO_Central"/>
</dbReference>
<dbReference type="GO" id="GO:0005524">
    <property type="term" value="F:ATP binding"/>
    <property type="evidence" value="ECO:0000318"/>
    <property type="project" value="GO_Central"/>
</dbReference>
<dbReference type="GO" id="GO:0016887">
    <property type="term" value="F:ATP hydrolysis activity"/>
    <property type="evidence" value="ECO:0000318"/>
    <property type="project" value="GO_Central"/>
</dbReference>
<dbReference type="CDD" id="cd02034">
    <property type="entry name" value="CooC1"/>
    <property type="match status" value="1"/>
</dbReference>
<dbReference type="FunFam" id="3.40.50.300:FF:001573">
    <property type="entry name" value="Carbon monoxide dehydrogenase accessory protein CooC"/>
    <property type="match status" value="1"/>
</dbReference>
<dbReference type="Gene3D" id="3.40.50.300">
    <property type="entry name" value="P-loop containing nucleotide triphosphate hydrolases"/>
    <property type="match status" value="1"/>
</dbReference>
<dbReference type="InterPro" id="IPR002586">
    <property type="entry name" value="CobQ/CobB/MinD/ParA_Nub-bd_dom"/>
</dbReference>
<dbReference type="InterPro" id="IPR014433">
    <property type="entry name" value="CooC"/>
</dbReference>
<dbReference type="InterPro" id="IPR027417">
    <property type="entry name" value="P-loop_NTPase"/>
</dbReference>
<dbReference type="InterPro" id="IPR050625">
    <property type="entry name" value="ParA/MinD_ATPase"/>
</dbReference>
<dbReference type="PANTHER" id="PTHR43384:SF3">
    <property type="entry name" value="AAA+ ATPASE DOMAIN-CONTAINING PROTEIN"/>
    <property type="match status" value="1"/>
</dbReference>
<dbReference type="PANTHER" id="PTHR43384">
    <property type="entry name" value="SEPTUM SITE-DETERMINING PROTEIN MIND HOMOLOG, CHLOROPLASTIC-RELATED"/>
    <property type="match status" value="1"/>
</dbReference>
<dbReference type="Pfam" id="PF01656">
    <property type="entry name" value="CbiA"/>
    <property type="match status" value="1"/>
</dbReference>
<dbReference type="PIRSF" id="PIRSF005647">
    <property type="entry name" value="CooC"/>
    <property type="match status" value="1"/>
</dbReference>
<dbReference type="SUPFAM" id="SSF52540">
    <property type="entry name" value="P-loop containing nucleoside triphosphate hydrolases"/>
    <property type="match status" value="1"/>
</dbReference>